<dbReference type="EMBL" id="AB092508">
    <property type="protein sequence ID" value="BAC77080.1"/>
    <property type="molecule type" value="Genomic_DNA"/>
</dbReference>
<dbReference type="SMR" id="Q7Y0W3"/>
<dbReference type="EnsemblPlants" id="OsLima_10g0013330.01">
    <property type="protein sequence ID" value="OsLima_10g0013330.01"/>
    <property type="gene ID" value="OsLima_10g0013330"/>
</dbReference>
<dbReference type="EnsemblPlants" id="OsMH63_10G013400_01">
    <property type="protein sequence ID" value="OsMH63_10G013400_01"/>
    <property type="gene ID" value="OsMH63_10G013400"/>
</dbReference>
<dbReference type="Gramene" id="OsLima_10g0013330.01">
    <property type="protein sequence ID" value="OsLima_10g0013330.01"/>
    <property type="gene ID" value="OsLima_10g0013330"/>
</dbReference>
<dbReference type="Gramene" id="OsMH63_10G013400_01">
    <property type="protein sequence ID" value="OsMH63_10G013400_01"/>
    <property type="gene ID" value="OsMH63_10G013400"/>
</dbReference>
<dbReference type="GO" id="GO:0005634">
    <property type="term" value="C:nucleus"/>
    <property type="evidence" value="ECO:0007669"/>
    <property type="project" value="UniProtKB-SubCell"/>
</dbReference>
<dbReference type="GO" id="GO:0003677">
    <property type="term" value="F:DNA binding"/>
    <property type="evidence" value="ECO:0000314"/>
    <property type="project" value="UniProtKB"/>
</dbReference>
<dbReference type="GO" id="GO:0003700">
    <property type="term" value="F:DNA-binding transcription factor activity"/>
    <property type="evidence" value="ECO:0007669"/>
    <property type="project" value="InterPro"/>
</dbReference>
<dbReference type="GO" id="GO:0009736">
    <property type="term" value="P:cytokinin-activated signaling pathway"/>
    <property type="evidence" value="ECO:0007669"/>
    <property type="project" value="InterPro"/>
</dbReference>
<dbReference type="GO" id="GO:0009908">
    <property type="term" value="P:flower development"/>
    <property type="evidence" value="ECO:0007669"/>
    <property type="project" value="UniProtKB-KW"/>
</dbReference>
<dbReference type="GO" id="GO:0000160">
    <property type="term" value="P:phosphorelay signal transduction system"/>
    <property type="evidence" value="ECO:0007669"/>
    <property type="project" value="UniProtKB-KW"/>
</dbReference>
<dbReference type="GO" id="GO:0048576">
    <property type="term" value="P:positive regulation of short-day photoperiodism, flowering"/>
    <property type="evidence" value="ECO:0000315"/>
    <property type="project" value="UniProtKB"/>
</dbReference>
<dbReference type="CDD" id="cd17584">
    <property type="entry name" value="REC_typeB_ARR-like"/>
    <property type="match status" value="1"/>
</dbReference>
<dbReference type="FunFam" id="1.10.10.60:FF:000007">
    <property type="entry name" value="Two-component response regulator"/>
    <property type="match status" value="1"/>
</dbReference>
<dbReference type="Gene3D" id="3.40.50.2300">
    <property type="match status" value="1"/>
</dbReference>
<dbReference type="Gene3D" id="1.10.10.60">
    <property type="entry name" value="Homeodomain-like"/>
    <property type="match status" value="1"/>
</dbReference>
<dbReference type="InterPro" id="IPR045279">
    <property type="entry name" value="ARR-like"/>
</dbReference>
<dbReference type="InterPro" id="IPR011006">
    <property type="entry name" value="CheY-like_superfamily"/>
</dbReference>
<dbReference type="InterPro" id="IPR009057">
    <property type="entry name" value="Homeodomain-like_sf"/>
</dbReference>
<dbReference type="InterPro" id="IPR017930">
    <property type="entry name" value="Myb_dom"/>
</dbReference>
<dbReference type="InterPro" id="IPR006447">
    <property type="entry name" value="Myb_dom_plants"/>
</dbReference>
<dbReference type="InterPro" id="IPR017053">
    <property type="entry name" value="Response_reg_B-typ_pln"/>
</dbReference>
<dbReference type="InterPro" id="IPR001005">
    <property type="entry name" value="SANT/Myb"/>
</dbReference>
<dbReference type="InterPro" id="IPR001789">
    <property type="entry name" value="Sig_transdc_resp-reg_receiver"/>
</dbReference>
<dbReference type="NCBIfam" id="TIGR01557">
    <property type="entry name" value="myb_SHAQKYF"/>
    <property type="match status" value="1"/>
</dbReference>
<dbReference type="PANTHER" id="PTHR43874">
    <property type="entry name" value="TWO-COMPONENT RESPONSE REGULATOR"/>
    <property type="match status" value="1"/>
</dbReference>
<dbReference type="PANTHER" id="PTHR43874:SF65">
    <property type="entry name" value="TWO-COMPONENT RESPONSE REGULATOR ORR30"/>
    <property type="match status" value="1"/>
</dbReference>
<dbReference type="Pfam" id="PF00249">
    <property type="entry name" value="Myb_DNA-binding"/>
    <property type="match status" value="1"/>
</dbReference>
<dbReference type="Pfam" id="PF00072">
    <property type="entry name" value="Response_reg"/>
    <property type="match status" value="1"/>
</dbReference>
<dbReference type="PIRSF" id="PIRSF036392">
    <property type="entry name" value="RR_ARR_type-B"/>
    <property type="match status" value="1"/>
</dbReference>
<dbReference type="SMART" id="SM00448">
    <property type="entry name" value="REC"/>
    <property type="match status" value="1"/>
</dbReference>
<dbReference type="SUPFAM" id="SSF52172">
    <property type="entry name" value="CheY-like"/>
    <property type="match status" value="1"/>
</dbReference>
<dbReference type="SUPFAM" id="SSF46689">
    <property type="entry name" value="Homeodomain-like"/>
    <property type="match status" value="1"/>
</dbReference>
<dbReference type="PROSITE" id="PS51294">
    <property type="entry name" value="HTH_MYB"/>
    <property type="match status" value="1"/>
</dbReference>
<dbReference type="PROSITE" id="PS50110">
    <property type="entry name" value="RESPONSE_REGULATORY"/>
    <property type="match status" value="1"/>
</dbReference>
<keyword id="KW-0010">Activator</keyword>
<keyword id="KW-0238">DNA-binding</keyword>
<keyword id="KW-0287">Flowering</keyword>
<keyword id="KW-0539">Nucleus</keyword>
<keyword id="KW-0597">Phosphoprotein</keyword>
<keyword id="KW-0804">Transcription</keyword>
<keyword id="KW-0805">Transcription regulation</keyword>
<keyword id="KW-0902">Two-component regulatory system</keyword>
<reference key="1">
    <citation type="journal article" date="2004" name="Genes Dev.">
        <title>Ehd1, a B-type response regulator in rice, confers short-day promotion of flowering and controls FT-like gene expression independently of Hd1.</title>
        <authorList>
            <person name="Doi K."/>
            <person name="Izawa T."/>
            <person name="Fuse T."/>
            <person name="Yamanouchi U."/>
            <person name="Kubo T."/>
            <person name="Shimatani Z."/>
            <person name="Yano M."/>
            <person name="Yoshimura A."/>
        </authorList>
    </citation>
    <scope>NUCLEOTIDE SEQUENCE [GENOMIC DNA]</scope>
    <scope>FUNCTION</scope>
    <scope>INDUCTION</scope>
    <source>
        <strain>cv. Kasalath</strain>
    </source>
</reference>
<sequence>MDHRELWPYGLRVLVIDDDCSYLSVMEDLLLKCSYKVTTYKNVREAVPFILDNPQIVDLVISDAFFPTEDGLLILQEVTSKFGIPTVIMASSGDTNTVMKYVANGAFDFLLKPVRIEELSNIWQHIFRKQMQDHKNNNMVGNLEKPGHPPSILAMARATPATTRSTATEASLAPLENEVRDDMVNYNGEITDIRDLGKSRLTWTTQLHRQFIAAVNHLGEDKAVPKKILGIMKVKHLTREQVASHLQKYRMQLKKSIPTTSKHGATLSSTALDKTQDHPSRSQYFNQDGCMEIMDYSLPRDDLSSGSECMLEELNDYSSEGFQDFRWDSDKQEYGPCFWNF</sequence>
<protein>
    <recommendedName>
        <fullName>Two-component response regulator EHD1</fullName>
    </recommendedName>
    <alternativeName>
        <fullName>Protein EARLY HEADING DATE 1</fullName>
    </alternativeName>
</protein>
<feature type="chain" id="PRO_0000377039" description="Two-component response regulator EHD1">
    <location>
        <begin position="1"/>
        <end position="341"/>
    </location>
</feature>
<feature type="domain" description="Response regulatory" evidence="1">
    <location>
        <begin position="12"/>
        <end position="127"/>
    </location>
</feature>
<feature type="domain" description="HTH myb-type" evidence="2">
    <location>
        <begin position="195"/>
        <end position="254"/>
    </location>
</feature>
<feature type="DNA-binding region" description="H-T-H motif" evidence="2">
    <location>
        <begin position="225"/>
        <end position="250"/>
    </location>
</feature>
<feature type="modified residue" description="4-aspartylphosphate" evidence="1">
    <location>
        <position position="63"/>
    </location>
</feature>
<accession>Q7Y0W3</accession>
<gene>
    <name type="primary">EHD1</name>
</gene>
<comment type="function">
    <text evidence="3">Transcriptional activator that acts as a floral inducer to promote short-day (SD) flowering pathway. Activates Hd3a and other FT-like genes independently from Hd1. May also activate MADS-box transcription factors involved in flowering regulation.</text>
</comment>
<comment type="subcellular location">
    <subcellularLocation>
        <location evidence="2">Nucleus</location>
    </subcellularLocation>
</comment>
<comment type="induction">
    <text evidence="3">Daily oscillation and diurnal expression in plants grown in short day (SD) but not in long day (LD) conditions.</text>
</comment>
<comment type="PTM">
    <text>Two-component system major event consists of a His-to-Asp phosphorelay between a sensor histidine kinase (HK) and a response regulator (RR). In plants, the His-to-Asp phosphorelay involves an additional intermediate named Histidine-containing phosphotransfer protein (HPt). This multistep phosphorelay consists of a His-Asp-His-Asp sequential transfer of a phosphate group between first a His and an Asp of the HK protein, followed by the transfer to a conserved His of the HPt protein and finally the transfer to an Asp in the receiver domain of the RR protein.</text>
</comment>
<name>EHD1_ORYSI</name>
<evidence type="ECO:0000255" key="1">
    <source>
        <dbReference type="PROSITE-ProRule" id="PRU00169"/>
    </source>
</evidence>
<evidence type="ECO:0000255" key="2">
    <source>
        <dbReference type="PROSITE-ProRule" id="PRU00625"/>
    </source>
</evidence>
<evidence type="ECO:0000269" key="3">
    <source>
    </source>
</evidence>
<proteinExistence type="evidence at transcript level"/>
<organism>
    <name type="scientific">Oryza sativa subsp. indica</name>
    <name type="common">Rice</name>
    <dbReference type="NCBI Taxonomy" id="39946"/>
    <lineage>
        <taxon>Eukaryota</taxon>
        <taxon>Viridiplantae</taxon>
        <taxon>Streptophyta</taxon>
        <taxon>Embryophyta</taxon>
        <taxon>Tracheophyta</taxon>
        <taxon>Spermatophyta</taxon>
        <taxon>Magnoliopsida</taxon>
        <taxon>Liliopsida</taxon>
        <taxon>Poales</taxon>
        <taxon>Poaceae</taxon>
        <taxon>BOP clade</taxon>
        <taxon>Oryzoideae</taxon>
        <taxon>Oryzeae</taxon>
        <taxon>Oryzinae</taxon>
        <taxon>Oryza</taxon>
        <taxon>Oryza sativa</taxon>
    </lineage>
</organism>